<sequence>MSEIKFYLVKGSALFGESHYPEKRKFVKIVRALNEKQAIEYIYSYFGSKNKIKRYNIKIEQISEIKEEEIPDRRIRELAKIDKIIM</sequence>
<evidence type="ECO:0000255" key="1">
    <source>
        <dbReference type="HAMAP-Rule" id="MF_00273"/>
    </source>
</evidence>
<evidence type="ECO:0000305" key="2"/>
<feature type="chain" id="PRO_1000204755" description="Large ribosomal subunit protein eL20">
    <location>
        <begin position="1"/>
        <end position="86"/>
    </location>
</feature>
<proteinExistence type="inferred from homology"/>
<reference key="1">
    <citation type="journal article" date="2009" name="Proc. Natl. Acad. Sci. U.S.A.">
        <title>Biogeography of the Sulfolobus islandicus pan-genome.</title>
        <authorList>
            <person name="Reno M.L."/>
            <person name="Held N.L."/>
            <person name="Fields C.J."/>
            <person name="Burke P.V."/>
            <person name="Whitaker R.J."/>
        </authorList>
    </citation>
    <scope>NUCLEOTIDE SEQUENCE [LARGE SCALE GENOMIC DNA]</scope>
    <source>
        <strain>M.16.27</strain>
    </source>
</reference>
<comment type="subunit">
    <text evidence="1">Part of the 50S ribosomal subunit. Binds 23S rRNA.</text>
</comment>
<comment type="similarity">
    <text evidence="1">Belongs to the eukaryotic ribosomal protein eL20 family.</text>
</comment>
<accession>C3MZB4</accession>
<name>RL18A_SACI3</name>
<organism>
    <name type="scientific">Saccharolobus islandicus (strain M.16.27)</name>
    <name type="common">Sulfolobus islandicus</name>
    <dbReference type="NCBI Taxonomy" id="427318"/>
    <lineage>
        <taxon>Archaea</taxon>
        <taxon>Thermoproteota</taxon>
        <taxon>Thermoprotei</taxon>
        <taxon>Sulfolobales</taxon>
        <taxon>Sulfolobaceae</taxon>
        <taxon>Saccharolobus</taxon>
    </lineage>
</organism>
<protein>
    <recommendedName>
        <fullName evidence="1">Large ribosomal subunit protein eL20</fullName>
    </recommendedName>
    <alternativeName>
        <fullName evidence="2">50S ribosomal protein L18Ae</fullName>
    </alternativeName>
    <alternativeName>
        <fullName evidence="1">50S ribosomal protein L20e</fullName>
    </alternativeName>
    <alternativeName>
        <fullName evidence="1">50S ribosomal protein LX</fullName>
    </alternativeName>
</protein>
<keyword id="KW-0687">Ribonucleoprotein</keyword>
<keyword id="KW-0689">Ribosomal protein</keyword>
<keyword id="KW-0694">RNA-binding</keyword>
<keyword id="KW-0699">rRNA-binding</keyword>
<gene>
    <name evidence="1" type="primary">rpl18a</name>
    <name evidence="1" type="synonym">rpl20e</name>
    <name evidence="1" type="synonym">rplX</name>
    <name type="ordered locus">M1627_1874</name>
</gene>
<dbReference type="EMBL" id="CP001401">
    <property type="protein sequence ID" value="ACP55746.1"/>
    <property type="molecule type" value="Genomic_DNA"/>
</dbReference>
<dbReference type="RefSeq" id="WP_012711732.1">
    <property type="nucleotide sequence ID" value="NC_012632.1"/>
</dbReference>
<dbReference type="SMR" id="C3MZB4"/>
<dbReference type="GeneID" id="84062107"/>
<dbReference type="KEGG" id="sim:M1627_1874"/>
<dbReference type="HOGENOM" id="CLU_177460_0_0_2"/>
<dbReference type="Proteomes" id="UP000002307">
    <property type="component" value="Chromosome"/>
</dbReference>
<dbReference type="GO" id="GO:1990904">
    <property type="term" value="C:ribonucleoprotein complex"/>
    <property type="evidence" value="ECO:0007669"/>
    <property type="project" value="UniProtKB-KW"/>
</dbReference>
<dbReference type="GO" id="GO:0005840">
    <property type="term" value="C:ribosome"/>
    <property type="evidence" value="ECO:0007669"/>
    <property type="project" value="UniProtKB-KW"/>
</dbReference>
<dbReference type="GO" id="GO:0070180">
    <property type="term" value="F:large ribosomal subunit rRNA binding"/>
    <property type="evidence" value="ECO:0007669"/>
    <property type="project" value="UniProtKB-UniRule"/>
</dbReference>
<dbReference type="GO" id="GO:0003735">
    <property type="term" value="F:structural constituent of ribosome"/>
    <property type="evidence" value="ECO:0007669"/>
    <property type="project" value="InterPro"/>
</dbReference>
<dbReference type="GO" id="GO:0006412">
    <property type="term" value="P:translation"/>
    <property type="evidence" value="ECO:0007669"/>
    <property type="project" value="UniProtKB-UniRule"/>
</dbReference>
<dbReference type="Gene3D" id="3.10.20.10">
    <property type="match status" value="1"/>
</dbReference>
<dbReference type="HAMAP" id="MF_00273">
    <property type="entry name" value="Ribosomal_eL20"/>
    <property type="match status" value="1"/>
</dbReference>
<dbReference type="InterPro" id="IPR028877">
    <property type="entry name" value="Ribosomal_eL20"/>
</dbReference>
<dbReference type="InterPro" id="IPR023573">
    <property type="entry name" value="Ribosomal_eL20_dom"/>
</dbReference>
<dbReference type="NCBIfam" id="NF001981">
    <property type="entry name" value="PRK00773.1-1"/>
    <property type="match status" value="1"/>
</dbReference>
<dbReference type="Pfam" id="PF01775">
    <property type="entry name" value="Ribosomal_L18A"/>
    <property type="match status" value="1"/>
</dbReference>
<dbReference type="SUPFAM" id="SSF160374">
    <property type="entry name" value="RplX-like"/>
    <property type="match status" value="1"/>
</dbReference>